<keyword id="KW-0030">Aminoacyl-tRNA synthetase</keyword>
<keyword id="KW-0067">ATP-binding</keyword>
<keyword id="KW-0963">Cytoplasm</keyword>
<keyword id="KW-0436">Ligase</keyword>
<keyword id="KW-0460">Magnesium</keyword>
<keyword id="KW-0479">Metal-binding</keyword>
<keyword id="KW-0547">Nucleotide-binding</keyword>
<keyword id="KW-0648">Protein biosynthesis</keyword>
<accession>O24822</accession>
<organism>
    <name type="scientific">Haloferax volcanii</name>
    <name type="common">Halobacterium volcanii</name>
    <dbReference type="NCBI Taxonomy" id="2246"/>
    <lineage>
        <taxon>Archaea</taxon>
        <taxon>Methanobacteriati</taxon>
        <taxon>Methanobacteriota</taxon>
        <taxon>Stenosarchaea group</taxon>
        <taxon>Halobacteria</taxon>
        <taxon>Halobacteriales</taxon>
        <taxon>Haloferacaceae</taxon>
        <taxon>Haloferax</taxon>
    </lineage>
</organism>
<feature type="chain" id="PRO_0000110993" description="Aspartate--tRNA(Asp/Asn) ligase">
    <location>
        <begin position="1"/>
        <end position="433"/>
    </location>
</feature>
<feature type="region of interest" description="Aspartate" evidence="1">
    <location>
        <begin position="189"/>
        <end position="192"/>
    </location>
</feature>
<feature type="binding site" evidence="1">
    <location>
        <position position="167"/>
    </location>
    <ligand>
        <name>L-aspartate</name>
        <dbReference type="ChEBI" id="CHEBI:29991"/>
    </ligand>
</feature>
<feature type="binding site" evidence="1">
    <location>
        <begin position="211"/>
        <end position="213"/>
    </location>
    <ligand>
        <name>ATP</name>
        <dbReference type="ChEBI" id="CHEBI:30616"/>
    </ligand>
</feature>
<feature type="binding site" evidence="1">
    <location>
        <position position="211"/>
    </location>
    <ligand>
        <name>L-aspartate</name>
        <dbReference type="ChEBI" id="CHEBI:29991"/>
    </ligand>
</feature>
<feature type="binding site" evidence="1">
    <location>
        <begin position="219"/>
        <end position="221"/>
    </location>
    <ligand>
        <name>ATP</name>
        <dbReference type="ChEBI" id="CHEBI:30616"/>
    </ligand>
</feature>
<feature type="binding site" evidence="1">
    <location>
        <position position="356"/>
    </location>
    <ligand>
        <name>ATP</name>
        <dbReference type="ChEBI" id="CHEBI:30616"/>
    </ligand>
</feature>
<feature type="binding site" evidence="1">
    <location>
        <position position="356"/>
    </location>
    <ligand>
        <name>Mg(2+)</name>
        <dbReference type="ChEBI" id="CHEBI:18420"/>
        <label>2</label>
    </ligand>
</feature>
<feature type="binding site" evidence="1">
    <location>
        <position position="356"/>
    </location>
    <ligand>
        <name>Mg(2+)</name>
        <dbReference type="ChEBI" id="CHEBI:18420"/>
        <label>3</label>
    </ligand>
</feature>
<feature type="binding site" evidence="1">
    <location>
        <position position="359"/>
    </location>
    <ligand>
        <name>L-aspartate</name>
        <dbReference type="ChEBI" id="CHEBI:29991"/>
    </ligand>
</feature>
<feature type="binding site" evidence="1">
    <location>
        <position position="359"/>
    </location>
    <ligand>
        <name>Mg(2+)</name>
        <dbReference type="ChEBI" id="CHEBI:18420"/>
        <label>2</label>
    </ligand>
</feature>
<feature type="binding site" evidence="1">
    <location>
        <position position="363"/>
    </location>
    <ligand>
        <name>L-aspartate</name>
        <dbReference type="ChEBI" id="CHEBI:29991"/>
    </ligand>
</feature>
<feature type="binding site" evidence="1">
    <location>
        <begin position="404"/>
        <end position="407"/>
    </location>
    <ligand>
        <name>ATP</name>
        <dbReference type="ChEBI" id="CHEBI:30616"/>
    </ligand>
</feature>
<feature type="site" description="Important for tRNA non-discrimination" evidence="1">
    <location>
        <position position="82"/>
    </location>
</feature>
<proteinExistence type="inferred from homology"/>
<reference key="1">
    <citation type="submission" date="1998-01" db="EMBL/GenBank/DDBJ databases">
        <title>Haloferax volcanii gene for aspartyl tRNA synthetase.</title>
        <authorList>
            <person name="Shinoda H."/>
            <person name="Ihara H."/>
            <person name="Ishigami M."/>
            <person name="Nakano Y."/>
            <person name="Yamaji R."/>
        </authorList>
    </citation>
    <scope>NUCLEOTIDE SEQUENCE [GENOMIC DNA]</scope>
</reference>
<dbReference type="EC" id="6.1.1.23" evidence="1"/>
<dbReference type="EMBL" id="AB010464">
    <property type="protein sequence ID" value="BAA31457.1"/>
    <property type="molecule type" value="Genomic_DNA"/>
</dbReference>
<dbReference type="SMR" id="O24822"/>
<dbReference type="GO" id="GO:0017101">
    <property type="term" value="C:aminoacyl-tRNA synthetase multienzyme complex"/>
    <property type="evidence" value="ECO:0007669"/>
    <property type="project" value="TreeGrafter"/>
</dbReference>
<dbReference type="GO" id="GO:0005829">
    <property type="term" value="C:cytosol"/>
    <property type="evidence" value="ECO:0007669"/>
    <property type="project" value="TreeGrafter"/>
</dbReference>
<dbReference type="GO" id="GO:0004815">
    <property type="term" value="F:aspartate-tRNA ligase activity"/>
    <property type="evidence" value="ECO:0007669"/>
    <property type="project" value="UniProtKB-UniRule"/>
</dbReference>
<dbReference type="GO" id="GO:0050560">
    <property type="term" value="F:aspartate-tRNA(Asn) ligase activity"/>
    <property type="evidence" value="ECO:0007669"/>
    <property type="project" value="UniProtKB-EC"/>
</dbReference>
<dbReference type="GO" id="GO:0005524">
    <property type="term" value="F:ATP binding"/>
    <property type="evidence" value="ECO:0007669"/>
    <property type="project" value="UniProtKB-UniRule"/>
</dbReference>
<dbReference type="GO" id="GO:0000287">
    <property type="term" value="F:magnesium ion binding"/>
    <property type="evidence" value="ECO:0007669"/>
    <property type="project" value="UniProtKB-UniRule"/>
</dbReference>
<dbReference type="GO" id="GO:0003723">
    <property type="term" value="F:RNA binding"/>
    <property type="evidence" value="ECO:0007669"/>
    <property type="project" value="TreeGrafter"/>
</dbReference>
<dbReference type="GO" id="GO:0006422">
    <property type="term" value="P:aspartyl-tRNA aminoacylation"/>
    <property type="evidence" value="ECO:0007669"/>
    <property type="project" value="UniProtKB-UniRule"/>
</dbReference>
<dbReference type="CDD" id="cd00776">
    <property type="entry name" value="AsxRS_core"/>
    <property type="match status" value="1"/>
</dbReference>
<dbReference type="CDD" id="cd04316">
    <property type="entry name" value="ND_PkAspRS_like_N"/>
    <property type="match status" value="1"/>
</dbReference>
<dbReference type="FunFam" id="3.30.930.10:FF:000038">
    <property type="entry name" value="Aspartate--tRNA ligase"/>
    <property type="match status" value="1"/>
</dbReference>
<dbReference type="Gene3D" id="3.30.930.10">
    <property type="entry name" value="Bira Bifunctional Protein, Domain 2"/>
    <property type="match status" value="1"/>
</dbReference>
<dbReference type="Gene3D" id="2.40.50.140">
    <property type="entry name" value="Nucleic acid-binding proteins"/>
    <property type="match status" value="1"/>
</dbReference>
<dbReference type="HAMAP" id="MF_02075">
    <property type="entry name" value="Asp_tRNA_synth_type2"/>
    <property type="match status" value="1"/>
</dbReference>
<dbReference type="InterPro" id="IPR004364">
    <property type="entry name" value="Aa-tRNA-synt_II"/>
</dbReference>
<dbReference type="InterPro" id="IPR006195">
    <property type="entry name" value="aa-tRNA-synth_II"/>
</dbReference>
<dbReference type="InterPro" id="IPR045864">
    <property type="entry name" value="aa-tRNA-synth_II/BPL/LPL"/>
</dbReference>
<dbReference type="InterPro" id="IPR004523">
    <property type="entry name" value="Asp-tRNA_synthase_2"/>
</dbReference>
<dbReference type="InterPro" id="IPR002312">
    <property type="entry name" value="Asp/Asn-tRNA-synth_IIb"/>
</dbReference>
<dbReference type="InterPro" id="IPR012340">
    <property type="entry name" value="NA-bd_OB-fold"/>
</dbReference>
<dbReference type="InterPro" id="IPR004365">
    <property type="entry name" value="NA-bd_OB_tRNA"/>
</dbReference>
<dbReference type="NCBIfam" id="TIGR00458">
    <property type="entry name" value="aspS_nondisc"/>
    <property type="match status" value="1"/>
</dbReference>
<dbReference type="NCBIfam" id="NF003483">
    <property type="entry name" value="PRK05159.1"/>
    <property type="match status" value="1"/>
</dbReference>
<dbReference type="PANTHER" id="PTHR43450:SF1">
    <property type="entry name" value="ASPARTATE--TRNA LIGASE, CYTOPLASMIC"/>
    <property type="match status" value="1"/>
</dbReference>
<dbReference type="PANTHER" id="PTHR43450">
    <property type="entry name" value="ASPARTYL-TRNA SYNTHETASE"/>
    <property type="match status" value="1"/>
</dbReference>
<dbReference type="Pfam" id="PF00152">
    <property type="entry name" value="tRNA-synt_2"/>
    <property type="match status" value="1"/>
</dbReference>
<dbReference type="Pfam" id="PF01336">
    <property type="entry name" value="tRNA_anti-codon"/>
    <property type="match status" value="1"/>
</dbReference>
<dbReference type="PRINTS" id="PR01042">
    <property type="entry name" value="TRNASYNTHASP"/>
</dbReference>
<dbReference type="SUPFAM" id="SSF55681">
    <property type="entry name" value="Class II aaRS and biotin synthetases"/>
    <property type="match status" value="1"/>
</dbReference>
<dbReference type="SUPFAM" id="SSF50249">
    <property type="entry name" value="Nucleic acid-binding proteins"/>
    <property type="match status" value="1"/>
</dbReference>
<dbReference type="PROSITE" id="PS50862">
    <property type="entry name" value="AA_TRNA_LIGASE_II"/>
    <property type="match status" value="1"/>
</dbReference>
<name>SYDND_HALVO</name>
<evidence type="ECO:0000255" key="1">
    <source>
        <dbReference type="HAMAP-Rule" id="MF_02075"/>
    </source>
</evidence>
<gene>
    <name evidence="1" type="primary">aspS</name>
</gene>
<comment type="function">
    <text evidence="1">Aspartyl-tRNA synthetase with relaxed tRNA specificity since it is able to aspartylate not only its cognate tRNA(Asp) but also tRNA(Asn). Reaction proceeds in two steps: L-aspartate is first activated by ATP to form Asp-AMP and then transferred to the acceptor end of tRNA(Asp/Asn).</text>
</comment>
<comment type="catalytic activity">
    <reaction evidence="1">
        <text>tRNA(Asx) + L-aspartate + ATP = L-aspartyl-tRNA(Asx) + AMP + diphosphate</text>
        <dbReference type="Rhea" id="RHEA:18349"/>
        <dbReference type="Rhea" id="RHEA-COMP:9710"/>
        <dbReference type="Rhea" id="RHEA-COMP:9711"/>
        <dbReference type="ChEBI" id="CHEBI:29991"/>
        <dbReference type="ChEBI" id="CHEBI:30616"/>
        <dbReference type="ChEBI" id="CHEBI:33019"/>
        <dbReference type="ChEBI" id="CHEBI:78442"/>
        <dbReference type="ChEBI" id="CHEBI:78516"/>
        <dbReference type="ChEBI" id="CHEBI:456215"/>
        <dbReference type="EC" id="6.1.1.23"/>
    </reaction>
</comment>
<comment type="cofactor">
    <cofactor evidence="1">
        <name>Mg(2+)</name>
        <dbReference type="ChEBI" id="CHEBI:18420"/>
    </cofactor>
    <text evidence="1">Binds 3 Mg(2+) cations per subunit. The strongest magnesium site (Mg1) is bound to the beta- and gamma-phosphates of ATP and four water molecules complete its coordination sphere.</text>
</comment>
<comment type="subunit">
    <text evidence="1">Homodimer.</text>
</comment>
<comment type="subcellular location">
    <subcellularLocation>
        <location evidence="1">Cytoplasm</location>
    </subcellularLocation>
</comment>
<comment type="similarity">
    <text evidence="1">Belongs to the class-II aminoacyl-tRNA synthetase family. Type 2 subfamily.</text>
</comment>
<sequence length="433" mass="48691">MRNRTYTADAEPGDTVTVAGWVHEVRDLGGIAFLILRDTSGKIQVKFEKDEMDDDLVETGLGVHRESVISVTGEVDEEPRAPTGVEVTPESLDVIAEAEAQLPLDPSGKVDAELSTRLDNRTLDLRKDEVKAIFEIRAEVQRAVRDKFRDLRATEINTPKIVATGTEGGTELFPITYFGQEAFMNQSPQLFKQLMVGSGLERVFEVGPIFRAEEHNTPRHLNEATSIDFESAFIDHTEAMDVCEAVVTAAYEAVEENCQDELEALGLEEEFERRPRVPAAHLRGGHRAHQRTGELDEQLVWGDDLPTEGEKALGEDVGEHYFITDWPSEIKPFYIKDHDDDETLSTGFDMMHPNMELVSGGQREHRFDHLVAGFEQQGLDPDAFEYYTKMFKYGMPPHAGFGLGGERLIMTMLGLENIREAVLFPRDRQRLSP</sequence>
<protein>
    <recommendedName>
        <fullName evidence="1">Aspartate--tRNA(Asp/Asn) ligase</fullName>
        <ecNumber evidence="1">6.1.1.23</ecNumber>
    </recommendedName>
    <alternativeName>
        <fullName evidence="1">Aspartyl-tRNA synthetase</fullName>
        <shortName evidence="1">AspRS</shortName>
    </alternativeName>
    <alternativeName>
        <fullName evidence="1">Non-discriminating aspartyl-tRNA synthetase</fullName>
        <shortName evidence="1">ND-AspRS</shortName>
    </alternativeName>
</protein>